<sequence>MLDDATYTPRLKTLYKDTIRGALKEEFGYKNEMQIPKLDKIVLNIGCGRAAVKDSKKAKSAQEDLTKIAGQKALTTVAKNSIAGFRVREGMPMGAKVTLRGERMYEFLDRLITIAMPRIRDFRGVSGTSFDGRGNYALGLKEHIVFPEIDFDKIDEAWGMDIVIATTANTDAEAKALLKAFNMPFNS</sequence>
<organism>
    <name type="scientific">Ruegeria sp. (strain TM1040)</name>
    <name type="common">Silicibacter sp.</name>
    <dbReference type="NCBI Taxonomy" id="292414"/>
    <lineage>
        <taxon>Bacteria</taxon>
        <taxon>Pseudomonadati</taxon>
        <taxon>Pseudomonadota</taxon>
        <taxon>Alphaproteobacteria</taxon>
        <taxon>Rhodobacterales</taxon>
        <taxon>Roseobacteraceae</taxon>
        <taxon>Ruegeria</taxon>
    </lineage>
</organism>
<keyword id="KW-1185">Reference proteome</keyword>
<keyword id="KW-0687">Ribonucleoprotein</keyword>
<keyword id="KW-0689">Ribosomal protein</keyword>
<keyword id="KW-0694">RNA-binding</keyword>
<keyword id="KW-0699">rRNA-binding</keyword>
<keyword id="KW-0820">tRNA-binding</keyword>
<proteinExistence type="inferred from homology"/>
<protein>
    <recommendedName>
        <fullName evidence="1">Large ribosomal subunit protein uL5</fullName>
    </recommendedName>
    <alternativeName>
        <fullName evidence="2">50S ribosomal protein L5</fullName>
    </alternativeName>
</protein>
<comment type="function">
    <text evidence="1">This is one of the proteins that bind and probably mediate the attachment of the 5S RNA into the large ribosomal subunit, where it forms part of the central protuberance. In the 70S ribosome it contacts protein S13 of the 30S subunit (bridge B1b), connecting the 2 subunits; this bridge is implicated in subunit movement. Contacts the P site tRNA; the 5S rRNA and some of its associated proteins might help stabilize positioning of ribosome-bound tRNAs.</text>
</comment>
<comment type="subunit">
    <text evidence="1">Part of the 50S ribosomal subunit; part of the 5S rRNA/L5/L18/L25 subcomplex. Contacts the 5S rRNA and the P site tRNA. Forms a bridge to the 30S subunit in the 70S ribosome.</text>
</comment>
<comment type="similarity">
    <text evidence="1">Belongs to the universal ribosomal protein uL5 family.</text>
</comment>
<evidence type="ECO:0000255" key="1">
    <source>
        <dbReference type="HAMAP-Rule" id="MF_01333"/>
    </source>
</evidence>
<evidence type="ECO:0000305" key="2"/>
<gene>
    <name evidence="1" type="primary">rplE</name>
    <name type="ordered locus">TM1040_0266</name>
</gene>
<reference key="1">
    <citation type="submission" date="2006-05" db="EMBL/GenBank/DDBJ databases">
        <title>Complete sequence of chromosome of Silicibacter sp. TM1040.</title>
        <authorList>
            <consortium name="US DOE Joint Genome Institute"/>
            <person name="Copeland A."/>
            <person name="Lucas S."/>
            <person name="Lapidus A."/>
            <person name="Barry K."/>
            <person name="Detter J.C."/>
            <person name="Glavina del Rio T."/>
            <person name="Hammon N."/>
            <person name="Israni S."/>
            <person name="Dalin E."/>
            <person name="Tice H."/>
            <person name="Pitluck S."/>
            <person name="Brettin T."/>
            <person name="Bruce D."/>
            <person name="Han C."/>
            <person name="Tapia R."/>
            <person name="Goodwin L."/>
            <person name="Thompson L.S."/>
            <person name="Gilna P."/>
            <person name="Schmutz J."/>
            <person name="Larimer F."/>
            <person name="Land M."/>
            <person name="Hauser L."/>
            <person name="Kyrpides N."/>
            <person name="Kim E."/>
            <person name="Belas R."/>
            <person name="Moran M.A."/>
            <person name="Buchan A."/>
            <person name="Gonzalez J.M."/>
            <person name="Schell M.A."/>
            <person name="Sun F."/>
            <person name="Richardson P."/>
        </authorList>
    </citation>
    <scope>NUCLEOTIDE SEQUENCE [LARGE SCALE GENOMIC DNA]</scope>
    <source>
        <strain>TM1040</strain>
    </source>
</reference>
<dbReference type="EMBL" id="CP000377">
    <property type="protein sequence ID" value="ABF62999.1"/>
    <property type="molecule type" value="Genomic_DNA"/>
</dbReference>
<dbReference type="RefSeq" id="WP_011537618.1">
    <property type="nucleotide sequence ID" value="NC_008044.1"/>
</dbReference>
<dbReference type="SMR" id="Q1GK17"/>
<dbReference type="STRING" id="292414.TM1040_0266"/>
<dbReference type="KEGG" id="sit:TM1040_0266"/>
<dbReference type="eggNOG" id="COG0094">
    <property type="taxonomic scope" value="Bacteria"/>
</dbReference>
<dbReference type="HOGENOM" id="CLU_061015_2_1_5"/>
<dbReference type="OrthoDB" id="9806626at2"/>
<dbReference type="Proteomes" id="UP000000636">
    <property type="component" value="Chromosome"/>
</dbReference>
<dbReference type="GO" id="GO:1990904">
    <property type="term" value="C:ribonucleoprotein complex"/>
    <property type="evidence" value="ECO:0007669"/>
    <property type="project" value="UniProtKB-KW"/>
</dbReference>
<dbReference type="GO" id="GO:0005840">
    <property type="term" value="C:ribosome"/>
    <property type="evidence" value="ECO:0007669"/>
    <property type="project" value="UniProtKB-KW"/>
</dbReference>
<dbReference type="GO" id="GO:0019843">
    <property type="term" value="F:rRNA binding"/>
    <property type="evidence" value="ECO:0007669"/>
    <property type="project" value="UniProtKB-UniRule"/>
</dbReference>
<dbReference type="GO" id="GO:0003735">
    <property type="term" value="F:structural constituent of ribosome"/>
    <property type="evidence" value="ECO:0007669"/>
    <property type="project" value="InterPro"/>
</dbReference>
<dbReference type="GO" id="GO:0000049">
    <property type="term" value="F:tRNA binding"/>
    <property type="evidence" value="ECO:0007669"/>
    <property type="project" value="UniProtKB-UniRule"/>
</dbReference>
<dbReference type="GO" id="GO:0006412">
    <property type="term" value="P:translation"/>
    <property type="evidence" value="ECO:0007669"/>
    <property type="project" value="UniProtKB-UniRule"/>
</dbReference>
<dbReference type="FunFam" id="3.30.1440.10:FF:000001">
    <property type="entry name" value="50S ribosomal protein L5"/>
    <property type="match status" value="1"/>
</dbReference>
<dbReference type="Gene3D" id="3.30.1440.10">
    <property type="match status" value="1"/>
</dbReference>
<dbReference type="HAMAP" id="MF_01333_B">
    <property type="entry name" value="Ribosomal_uL5_B"/>
    <property type="match status" value="1"/>
</dbReference>
<dbReference type="InterPro" id="IPR002132">
    <property type="entry name" value="Ribosomal_uL5"/>
</dbReference>
<dbReference type="InterPro" id="IPR020930">
    <property type="entry name" value="Ribosomal_uL5_bac-type"/>
</dbReference>
<dbReference type="InterPro" id="IPR031309">
    <property type="entry name" value="Ribosomal_uL5_C"/>
</dbReference>
<dbReference type="InterPro" id="IPR020929">
    <property type="entry name" value="Ribosomal_uL5_CS"/>
</dbReference>
<dbReference type="InterPro" id="IPR022803">
    <property type="entry name" value="Ribosomal_uL5_dom_sf"/>
</dbReference>
<dbReference type="InterPro" id="IPR031310">
    <property type="entry name" value="Ribosomal_uL5_N"/>
</dbReference>
<dbReference type="NCBIfam" id="NF000585">
    <property type="entry name" value="PRK00010.1"/>
    <property type="match status" value="1"/>
</dbReference>
<dbReference type="PANTHER" id="PTHR11994">
    <property type="entry name" value="60S RIBOSOMAL PROTEIN L11-RELATED"/>
    <property type="match status" value="1"/>
</dbReference>
<dbReference type="Pfam" id="PF00281">
    <property type="entry name" value="Ribosomal_L5"/>
    <property type="match status" value="1"/>
</dbReference>
<dbReference type="Pfam" id="PF00673">
    <property type="entry name" value="Ribosomal_L5_C"/>
    <property type="match status" value="1"/>
</dbReference>
<dbReference type="PIRSF" id="PIRSF002161">
    <property type="entry name" value="Ribosomal_L5"/>
    <property type="match status" value="1"/>
</dbReference>
<dbReference type="SUPFAM" id="SSF55282">
    <property type="entry name" value="RL5-like"/>
    <property type="match status" value="1"/>
</dbReference>
<dbReference type="PROSITE" id="PS00358">
    <property type="entry name" value="RIBOSOMAL_L5"/>
    <property type="match status" value="1"/>
</dbReference>
<name>RL5_RUEST</name>
<accession>Q1GK17</accession>
<feature type="chain" id="PRO_1000052831" description="Large ribosomal subunit protein uL5">
    <location>
        <begin position="1"/>
        <end position="187"/>
    </location>
</feature>